<sequence>MAENENHVLSIRMSHPYYSEKEISRILSTRDPKENNLRMQAFAWISTLSKTLKFPVRTSGLAMLLYSRFQLFFPVNEIPLLECATACLVVASKIEDTAKKFRDILLAHYLQKHPGSEVDAHSQVCYKLIEENKKRILGLERMTLELICFDFRVRHPHNYMVKFAKSLKFSSSTASIAWNVCTDAYKTYTMLKYPAHIVAVASISIACKLQQLPQPIIPRSFFAPPALTEAVIADILDLYMHYQPHTCIGNMYTTEKLLGLCVDFQRAQKNSGRPQKPPQIDPHSSSLADEYRESNKRLQESKESCARFILDCDRKYFNTEFEKRMLEERRNKGTV</sequence>
<comment type="function">
    <text evidence="1 3">Cyclin subunit of the CTDK-I complex, which hyperphosphorylates the C-terminal heptapeptide repeat domain (CTD) of the largest RNA polymerase II subunit. As part of the CTDK-I complex, involved in RNA polymerase II transcriptional elongation and pre-mRNA 3'-end processing. Together with ctk3, required for ctk1/lsk1 CTD kinase activation (By similarity). Together with ctk1/lsk1, required for the regulation of cytokinesis by phosphorylating 'Ser-2' residues found in the heptad repeats of the CTD.</text>
</comment>
<comment type="subunit">
    <text evidence="1 3">CTDK-I consists of three subunits, ctk1/lsk1, ctk2/lsc1 and ctk3 (also called alpha, beta and gamma) (By similarity). Interacts with ctk1/lsk1. This interaction is dependent on ctk1/lsk1 kinase activity.</text>
</comment>
<comment type="subcellular location">
    <subcellularLocation>
        <location>Cytoplasm</location>
    </subcellularLocation>
    <subcellularLocation>
        <location>Nucleus</location>
    </subcellularLocation>
    <text>Nuclear localization is dependent on ctk1/lsk1.</text>
</comment>
<comment type="disruption phenotype">
    <text evidence="3">Cells are hyper-sensitive to actin depolymerizing drug, latrunculin A (Lat A). Deletion mutants are unable to complete septum formation upon LatA treatment, but are able to suppress the lethal, multiseptate phenotype conferred by the constitutive hyperactivation of the septation initiation network (SIN).</text>
</comment>
<comment type="similarity">
    <text evidence="4">Belongs to the cyclin family.</text>
</comment>
<name>CTK2_SCHPO</name>
<organism>
    <name type="scientific">Schizosaccharomyces pombe (strain 972 / ATCC 24843)</name>
    <name type="common">Fission yeast</name>
    <dbReference type="NCBI Taxonomy" id="284812"/>
    <lineage>
        <taxon>Eukaryota</taxon>
        <taxon>Fungi</taxon>
        <taxon>Dikarya</taxon>
        <taxon>Ascomycota</taxon>
        <taxon>Taphrinomycotina</taxon>
        <taxon>Schizosaccharomycetes</taxon>
        <taxon>Schizosaccharomycetales</taxon>
        <taxon>Schizosaccharomycetaceae</taxon>
        <taxon>Schizosaccharomyces</taxon>
    </lineage>
</organism>
<dbReference type="EMBL" id="CU329671">
    <property type="protein sequence ID" value="CAA19179.2"/>
    <property type="molecule type" value="Genomic_DNA"/>
</dbReference>
<dbReference type="PIR" id="T40529">
    <property type="entry name" value="T40529"/>
</dbReference>
<dbReference type="RefSeq" id="NP_595326.2">
    <property type="nucleotide sequence ID" value="NM_001021233.2"/>
</dbReference>
<dbReference type="SMR" id="O59748"/>
<dbReference type="BioGRID" id="277396">
    <property type="interactions" value="83"/>
</dbReference>
<dbReference type="FunCoup" id="O59748">
    <property type="interactions" value="162"/>
</dbReference>
<dbReference type="STRING" id="284812.O59748"/>
<dbReference type="PaxDb" id="4896-SPBC530.13.1"/>
<dbReference type="EnsemblFungi" id="SPBC530.13.1">
    <property type="protein sequence ID" value="SPBC530.13.1:pep"/>
    <property type="gene ID" value="SPBC530.13"/>
</dbReference>
<dbReference type="PomBase" id="SPBC530.13">
    <property type="gene designation" value="lsc1"/>
</dbReference>
<dbReference type="VEuPathDB" id="FungiDB:SPBC530.13"/>
<dbReference type="eggNOG" id="KOG0834">
    <property type="taxonomic scope" value="Eukaryota"/>
</dbReference>
<dbReference type="HOGENOM" id="CLU_829385_0_0_1"/>
<dbReference type="InParanoid" id="O59748"/>
<dbReference type="OMA" id="GITWIDN"/>
<dbReference type="Reactome" id="R-SPO-674695">
    <property type="pathway name" value="RNA Polymerase II Pre-transcription Events"/>
</dbReference>
<dbReference type="Reactome" id="R-SPO-6796648">
    <property type="pathway name" value="TP53 Regulates Transcription of DNA Repair Genes"/>
</dbReference>
<dbReference type="Reactome" id="R-SPO-6807505">
    <property type="pathway name" value="RNA polymerase II transcribes snRNA genes"/>
</dbReference>
<dbReference type="Reactome" id="R-SPO-9018519">
    <property type="pathway name" value="Estrogen-dependent gene expression"/>
</dbReference>
<dbReference type="PRO" id="PR:O59748"/>
<dbReference type="Proteomes" id="UP000002485">
    <property type="component" value="Chromosome II"/>
</dbReference>
<dbReference type="GO" id="GO:0070692">
    <property type="term" value="C:CTDK-1 complex"/>
    <property type="evidence" value="ECO:0000353"/>
    <property type="project" value="PomBase"/>
</dbReference>
<dbReference type="GO" id="GO:0008024">
    <property type="term" value="C:cyclin/CDK positive transcription elongation factor complex"/>
    <property type="evidence" value="ECO:0000318"/>
    <property type="project" value="GO_Central"/>
</dbReference>
<dbReference type="GO" id="GO:0005737">
    <property type="term" value="C:cytoplasm"/>
    <property type="evidence" value="ECO:0007005"/>
    <property type="project" value="PomBase"/>
</dbReference>
<dbReference type="GO" id="GO:0005829">
    <property type="term" value="C:cytosol"/>
    <property type="evidence" value="ECO:0007005"/>
    <property type="project" value="PomBase"/>
</dbReference>
<dbReference type="GO" id="GO:0019908">
    <property type="term" value="C:nuclear cyclin-dependent protein kinase holoenzyme complex"/>
    <property type="evidence" value="ECO:0000353"/>
    <property type="project" value="PomBase"/>
</dbReference>
<dbReference type="GO" id="GO:0005634">
    <property type="term" value="C:nucleus"/>
    <property type="evidence" value="ECO:0000314"/>
    <property type="project" value="PomBase"/>
</dbReference>
<dbReference type="GO" id="GO:0061575">
    <property type="term" value="F:cyclin-dependent protein serine/threonine kinase activator activity"/>
    <property type="evidence" value="ECO:0000315"/>
    <property type="project" value="PomBase"/>
</dbReference>
<dbReference type="GO" id="GO:0006397">
    <property type="term" value="P:mRNA processing"/>
    <property type="evidence" value="ECO:0007669"/>
    <property type="project" value="UniProtKB-KW"/>
</dbReference>
<dbReference type="GO" id="GO:0032786">
    <property type="term" value="P:positive regulation of DNA-templated transcription, elongation"/>
    <property type="evidence" value="ECO:0000318"/>
    <property type="project" value="GO_Central"/>
</dbReference>
<dbReference type="GO" id="GO:0045944">
    <property type="term" value="P:positive regulation of transcription by RNA polymerase II"/>
    <property type="evidence" value="ECO:0000315"/>
    <property type="project" value="PomBase"/>
</dbReference>
<dbReference type="CDD" id="cd20547">
    <property type="entry name" value="CYCLIN_ScCTK2-like_rpt1"/>
    <property type="match status" value="1"/>
</dbReference>
<dbReference type="CDD" id="cd20546">
    <property type="entry name" value="CYCLIN_SpCG1C_ScCTK2-like_rpt2"/>
    <property type="match status" value="1"/>
</dbReference>
<dbReference type="Gene3D" id="1.10.472.10">
    <property type="entry name" value="Cyclin-like"/>
    <property type="match status" value="2"/>
</dbReference>
<dbReference type="InterPro" id="IPR013763">
    <property type="entry name" value="Cyclin-like_dom"/>
</dbReference>
<dbReference type="InterPro" id="IPR036915">
    <property type="entry name" value="Cyclin-like_sf"/>
</dbReference>
<dbReference type="InterPro" id="IPR043198">
    <property type="entry name" value="Cyclin/Ssn8"/>
</dbReference>
<dbReference type="InterPro" id="IPR006671">
    <property type="entry name" value="Cyclin_N"/>
</dbReference>
<dbReference type="PANTHER" id="PTHR10026">
    <property type="entry name" value="CYCLIN"/>
    <property type="match status" value="1"/>
</dbReference>
<dbReference type="Pfam" id="PF00134">
    <property type="entry name" value="Cyclin_N"/>
    <property type="match status" value="1"/>
</dbReference>
<dbReference type="SMART" id="SM00385">
    <property type="entry name" value="CYCLIN"/>
    <property type="match status" value="2"/>
</dbReference>
<dbReference type="SUPFAM" id="SSF47954">
    <property type="entry name" value="Cyclin-like"/>
    <property type="match status" value="2"/>
</dbReference>
<protein>
    <recommendedName>
        <fullName>CTD kinase subunit beta</fullName>
        <shortName>CTDK-I subunit beta</shortName>
    </recommendedName>
    <alternativeName>
        <fullName>CTD kinase subunit 2</fullName>
    </alternativeName>
    <alternativeName>
        <fullName>Latrunculin sensitive cyclin knockout protein 1</fullName>
    </alternativeName>
</protein>
<evidence type="ECO:0000250" key="1"/>
<evidence type="ECO:0000256" key="2">
    <source>
        <dbReference type="SAM" id="MobiDB-lite"/>
    </source>
</evidence>
<evidence type="ECO:0000269" key="3">
    <source>
    </source>
</evidence>
<evidence type="ECO:0000305" key="4"/>
<reference key="1">
    <citation type="journal article" date="2002" name="Nature">
        <title>The genome sequence of Schizosaccharomyces pombe.</title>
        <authorList>
            <person name="Wood V."/>
            <person name="Gwilliam R."/>
            <person name="Rajandream M.A."/>
            <person name="Lyne M.H."/>
            <person name="Lyne R."/>
            <person name="Stewart A."/>
            <person name="Sgouros J.G."/>
            <person name="Peat N."/>
            <person name="Hayles J."/>
            <person name="Baker S.G."/>
            <person name="Basham D."/>
            <person name="Bowman S."/>
            <person name="Brooks K."/>
            <person name="Brown D."/>
            <person name="Brown S."/>
            <person name="Chillingworth T."/>
            <person name="Churcher C.M."/>
            <person name="Collins M."/>
            <person name="Connor R."/>
            <person name="Cronin A."/>
            <person name="Davis P."/>
            <person name="Feltwell T."/>
            <person name="Fraser A."/>
            <person name="Gentles S."/>
            <person name="Goble A."/>
            <person name="Hamlin N."/>
            <person name="Harris D.E."/>
            <person name="Hidalgo J."/>
            <person name="Hodgson G."/>
            <person name="Holroyd S."/>
            <person name="Hornsby T."/>
            <person name="Howarth S."/>
            <person name="Huckle E.J."/>
            <person name="Hunt S."/>
            <person name="Jagels K."/>
            <person name="James K.D."/>
            <person name="Jones L."/>
            <person name="Jones M."/>
            <person name="Leather S."/>
            <person name="McDonald S."/>
            <person name="McLean J."/>
            <person name="Mooney P."/>
            <person name="Moule S."/>
            <person name="Mungall K.L."/>
            <person name="Murphy L.D."/>
            <person name="Niblett D."/>
            <person name="Odell C."/>
            <person name="Oliver K."/>
            <person name="O'Neil S."/>
            <person name="Pearson D."/>
            <person name="Quail M.A."/>
            <person name="Rabbinowitsch E."/>
            <person name="Rutherford K.M."/>
            <person name="Rutter S."/>
            <person name="Saunders D."/>
            <person name="Seeger K."/>
            <person name="Sharp S."/>
            <person name="Skelton J."/>
            <person name="Simmonds M.N."/>
            <person name="Squares R."/>
            <person name="Squares S."/>
            <person name="Stevens K."/>
            <person name="Taylor K."/>
            <person name="Taylor R.G."/>
            <person name="Tivey A."/>
            <person name="Walsh S.V."/>
            <person name="Warren T."/>
            <person name="Whitehead S."/>
            <person name="Woodward J.R."/>
            <person name="Volckaert G."/>
            <person name="Aert R."/>
            <person name="Robben J."/>
            <person name="Grymonprez B."/>
            <person name="Weltjens I."/>
            <person name="Vanstreels E."/>
            <person name="Rieger M."/>
            <person name="Schaefer M."/>
            <person name="Mueller-Auer S."/>
            <person name="Gabel C."/>
            <person name="Fuchs M."/>
            <person name="Duesterhoeft A."/>
            <person name="Fritzc C."/>
            <person name="Holzer E."/>
            <person name="Moestl D."/>
            <person name="Hilbert H."/>
            <person name="Borzym K."/>
            <person name="Langer I."/>
            <person name="Beck A."/>
            <person name="Lehrach H."/>
            <person name="Reinhardt R."/>
            <person name="Pohl T.M."/>
            <person name="Eger P."/>
            <person name="Zimmermann W."/>
            <person name="Wedler H."/>
            <person name="Wambutt R."/>
            <person name="Purnelle B."/>
            <person name="Goffeau A."/>
            <person name="Cadieu E."/>
            <person name="Dreano S."/>
            <person name="Gloux S."/>
            <person name="Lelaure V."/>
            <person name="Mottier S."/>
            <person name="Galibert F."/>
            <person name="Aves S.J."/>
            <person name="Xiang Z."/>
            <person name="Hunt C."/>
            <person name="Moore K."/>
            <person name="Hurst S.M."/>
            <person name="Lucas M."/>
            <person name="Rochet M."/>
            <person name="Gaillardin C."/>
            <person name="Tallada V.A."/>
            <person name="Garzon A."/>
            <person name="Thode G."/>
            <person name="Daga R.R."/>
            <person name="Cruzado L."/>
            <person name="Jimenez J."/>
            <person name="Sanchez M."/>
            <person name="del Rey F."/>
            <person name="Benito J."/>
            <person name="Dominguez A."/>
            <person name="Revuelta J.L."/>
            <person name="Moreno S."/>
            <person name="Armstrong J."/>
            <person name="Forsburg S.L."/>
            <person name="Cerutti L."/>
            <person name="Lowe T."/>
            <person name="McCombie W.R."/>
            <person name="Paulsen I."/>
            <person name="Potashkin J."/>
            <person name="Shpakovski G.V."/>
            <person name="Ussery D."/>
            <person name="Barrell B.G."/>
            <person name="Nurse P."/>
        </authorList>
    </citation>
    <scope>NUCLEOTIDE SEQUENCE [LARGE SCALE GENOMIC DNA]</scope>
    <source>
        <strain>972 / ATCC 24843</strain>
    </source>
</reference>
<reference key="2">
    <citation type="journal article" date="2011" name="Science">
        <title>Comparative functional genomics of the fission yeasts.</title>
        <authorList>
            <person name="Rhind N."/>
            <person name="Chen Z."/>
            <person name="Yassour M."/>
            <person name="Thompson D.A."/>
            <person name="Haas B.J."/>
            <person name="Habib N."/>
            <person name="Wapinski I."/>
            <person name="Roy S."/>
            <person name="Lin M.F."/>
            <person name="Heiman D.I."/>
            <person name="Young S.K."/>
            <person name="Furuya K."/>
            <person name="Guo Y."/>
            <person name="Pidoux A."/>
            <person name="Chen H.M."/>
            <person name="Robbertse B."/>
            <person name="Goldberg J.M."/>
            <person name="Aoki K."/>
            <person name="Bayne E.H."/>
            <person name="Berlin A.M."/>
            <person name="Desjardins C.A."/>
            <person name="Dobbs E."/>
            <person name="Dukaj L."/>
            <person name="Fan L."/>
            <person name="FitzGerald M.G."/>
            <person name="French C."/>
            <person name="Gujja S."/>
            <person name="Hansen K."/>
            <person name="Keifenheim D."/>
            <person name="Levin J.Z."/>
            <person name="Mosher R.A."/>
            <person name="Mueller C.A."/>
            <person name="Pfiffner J."/>
            <person name="Priest M."/>
            <person name="Russ C."/>
            <person name="Smialowska A."/>
            <person name="Swoboda P."/>
            <person name="Sykes S.M."/>
            <person name="Vaughn M."/>
            <person name="Vengrova S."/>
            <person name="Yoder R."/>
            <person name="Zeng Q."/>
            <person name="Allshire R."/>
            <person name="Baulcombe D."/>
            <person name="Birren B.W."/>
            <person name="Brown W."/>
            <person name="Ekwall K."/>
            <person name="Kellis M."/>
            <person name="Leatherwood J."/>
            <person name="Levin H."/>
            <person name="Margalit H."/>
            <person name="Martienssen R."/>
            <person name="Nieduszynski C.A."/>
            <person name="Spatafora J.W."/>
            <person name="Friedman N."/>
            <person name="Dalgaard J.Z."/>
            <person name="Baumann P."/>
            <person name="Niki H."/>
            <person name="Regev A."/>
            <person name="Nusbaum C."/>
        </authorList>
    </citation>
    <scope>REVISION OF GENE MODEL</scope>
</reference>
<reference key="3">
    <citation type="journal article" date="2006" name="Nat. Biotechnol.">
        <title>ORFeome cloning and global analysis of protein localization in the fission yeast Schizosaccharomyces pombe.</title>
        <authorList>
            <person name="Matsuyama A."/>
            <person name="Arai R."/>
            <person name="Yashiroda Y."/>
            <person name="Shirai A."/>
            <person name="Kamata A."/>
            <person name="Sekido S."/>
            <person name="Kobayashi Y."/>
            <person name="Hashimoto A."/>
            <person name="Hamamoto M."/>
            <person name="Hiraoka Y."/>
            <person name="Horinouchi S."/>
            <person name="Yoshida M."/>
        </authorList>
    </citation>
    <scope>SUBCELLULAR LOCATION [LARGE SCALE ANALYSIS]</scope>
</reference>
<reference key="4">
    <citation type="journal article" date="2007" name="PLoS ONE">
        <title>A cyclin-dependent kinase that promotes cytokinesis through modulating phosphorylation of the carboxy terminal domain of the RNA Pol II Rpb1p sub-unit.</title>
        <authorList>
            <person name="Karagiannis J."/>
            <person name="Balasubramanian M.K."/>
        </authorList>
    </citation>
    <scope>FUNCTION</scope>
    <scope>INTERACTION WITH CTK1</scope>
    <scope>SUBCELLULAR LOCATION</scope>
    <scope>DISRUPTION PHENOTYPE</scope>
</reference>
<keyword id="KW-0195">Cyclin</keyword>
<keyword id="KW-0963">Cytoplasm</keyword>
<keyword id="KW-0507">mRNA processing</keyword>
<keyword id="KW-0539">Nucleus</keyword>
<keyword id="KW-1185">Reference proteome</keyword>
<keyword id="KW-0677">Repeat</keyword>
<keyword id="KW-0804">Transcription</keyword>
<gene>
    <name type="primary">lsc1</name>
    <name type="synonym">ctk2</name>
    <name type="ORF">SPBC530.13</name>
</gene>
<accession>O59748</accession>
<feature type="chain" id="PRO_0000310348" description="CTD kinase subunit beta">
    <location>
        <begin position="1"/>
        <end position="335"/>
    </location>
</feature>
<feature type="domain" description="Cyclin N-terminal 1">
    <location>
        <begin position="26"/>
        <end position="151"/>
    </location>
</feature>
<feature type="domain" description="Cyclin N-terminal 2">
    <location>
        <begin position="158"/>
        <end position="241"/>
    </location>
</feature>
<feature type="region of interest" description="Disordered" evidence="2">
    <location>
        <begin position="269"/>
        <end position="293"/>
    </location>
</feature>
<proteinExistence type="evidence at protein level"/>